<reference key="1">
    <citation type="submission" date="2007-10" db="EMBL/GenBank/DDBJ databases">
        <title>Complete sequence of Methanococcus maripaludis C6.</title>
        <authorList>
            <consortium name="US DOE Joint Genome Institute"/>
            <person name="Copeland A."/>
            <person name="Lucas S."/>
            <person name="Lapidus A."/>
            <person name="Barry K."/>
            <person name="Glavina del Rio T."/>
            <person name="Dalin E."/>
            <person name="Tice H."/>
            <person name="Pitluck S."/>
            <person name="Clum A."/>
            <person name="Schmutz J."/>
            <person name="Larimer F."/>
            <person name="Land M."/>
            <person name="Hauser L."/>
            <person name="Kyrpides N."/>
            <person name="Mikhailova N."/>
            <person name="Sieprawska-Lupa M."/>
            <person name="Whitman W.B."/>
            <person name="Richardson P."/>
        </authorList>
    </citation>
    <scope>NUCLEOTIDE SEQUENCE [LARGE SCALE GENOMIC DNA]</scope>
    <source>
        <strain>C6 / ATCC BAA-1332</strain>
    </source>
</reference>
<sequence length="340" mass="37329">MVNVLINGYGSIGKRVADAVAKQDDMKVIGVTKTKPDFEARMAVEKGYKLFAAIPERKHLFEEAGIPVEGTLDDIIEDADIVVDGAPKKIGKANLENVYKKHGVKAIIQGGEKAGDAQDSFNSLWSYNRCYGKDYIRLVSCNTTGLCRSMYAINSVADILKARIVLIRRAADPNDVKTGPVNAIVPNPVSVPSHHGPDVVSVIPELDGKIMTSAVIVPTTLMHMHSIMVETSGTNRDEIIDALAKTPRILTLKASEGFDSTAKIIEYARDLGRSRYDLNEIAVWEESVNVVDNEVYMMQAIHQESDVIPENVDCIRAMLEMESDNLKSIEKTNKAMGLIK</sequence>
<organism>
    <name type="scientific">Methanococcus maripaludis (strain C6 / ATCC BAA-1332)</name>
    <dbReference type="NCBI Taxonomy" id="444158"/>
    <lineage>
        <taxon>Archaea</taxon>
        <taxon>Methanobacteriati</taxon>
        <taxon>Methanobacteriota</taxon>
        <taxon>Methanomada group</taxon>
        <taxon>Methanococci</taxon>
        <taxon>Methanococcales</taxon>
        <taxon>Methanococcaceae</taxon>
        <taxon>Methanococcus</taxon>
    </lineage>
</organism>
<gene>
    <name evidence="1" type="primary">gap</name>
    <name type="ordered locus">MmarC6_0626</name>
</gene>
<keyword id="KW-0963">Cytoplasm</keyword>
<keyword id="KW-0324">Glycolysis</keyword>
<keyword id="KW-0520">NAD</keyword>
<keyword id="KW-0521">NADP</keyword>
<keyword id="KW-0560">Oxidoreductase</keyword>
<evidence type="ECO:0000255" key="1">
    <source>
        <dbReference type="HAMAP-Rule" id="MF_00559"/>
    </source>
</evidence>
<protein>
    <recommendedName>
        <fullName evidence="1">Glyceraldehyde-3-phosphate dehydrogenase</fullName>
        <shortName evidence="1">GAPDH</shortName>
        <ecNumber evidence="1">1.2.1.59</ecNumber>
    </recommendedName>
    <alternativeName>
        <fullName evidence="1">NAD(P)-dependent glyceraldehyde-3-phosphate dehydrogenase</fullName>
    </alternativeName>
</protein>
<accession>A9A6M9</accession>
<name>G3P_METM6</name>
<feature type="chain" id="PRO_1000129246" description="Glyceraldehyde-3-phosphate dehydrogenase">
    <location>
        <begin position="1"/>
        <end position="340"/>
    </location>
</feature>
<feature type="active site" description="Nucleophile" evidence="1">
    <location>
        <position position="141"/>
    </location>
</feature>
<feature type="binding site" evidence="1">
    <location>
        <begin position="11"/>
        <end position="12"/>
    </location>
    <ligand>
        <name>NAD(+)</name>
        <dbReference type="ChEBI" id="CHEBI:57540"/>
    </ligand>
</feature>
<feature type="binding site" evidence="1">
    <location>
        <position position="111"/>
    </location>
    <ligand>
        <name>NAD(+)</name>
        <dbReference type="ChEBI" id="CHEBI:57540"/>
    </ligand>
</feature>
<feature type="binding site" evidence="1">
    <location>
        <begin position="140"/>
        <end position="142"/>
    </location>
    <ligand>
        <name>D-glyceraldehyde 3-phosphate</name>
        <dbReference type="ChEBI" id="CHEBI:59776"/>
    </ligand>
</feature>
<feature type="binding site" evidence="1">
    <location>
        <position position="169"/>
    </location>
    <ligand>
        <name>NAD(+)</name>
        <dbReference type="ChEBI" id="CHEBI:57540"/>
    </ligand>
</feature>
<feature type="binding site" evidence="1">
    <location>
        <begin position="195"/>
        <end position="196"/>
    </location>
    <ligand>
        <name>D-glyceraldehyde 3-phosphate</name>
        <dbReference type="ChEBI" id="CHEBI:59776"/>
    </ligand>
</feature>
<feature type="binding site" evidence="1">
    <location>
        <position position="303"/>
    </location>
    <ligand>
        <name>NAD(+)</name>
        <dbReference type="ChEBI" id="CHEBI:57540"/>
    </ligand>
</feature>
<dbReference type="EC" id="1.2.1.59" evidence="1"/>
<dbReference type="EMBL" id="CP000867">
    <property type="protein sequence ID" value="ABX01443.1"/>
    <property type="molecule type" value="Genomic_DNA"/>
</dbReference>
<dbReference type="SMR" id="A9A6M9"/>
<dbReference type="STRING" id="444158.MmarC6_0626"/>
<dbReference type="KEGG" id="mmx:MmarC6_0626"/>
<dbReference type="eggNOG" id="arCOG00493">
    <property type="taxonomic scope" value="Archaea"/>
</dbReference>
<dbReference type="HOGENOM" id="CLU_069533_0_0_2"/>
<dbReference type="OrthoDB" id="295712at2157"/>
<dbReference type="PhylomeDB" id="A9A6M9"/>
<dbReference type="UniPathway" id="UPA00109">
    <property type="reaction ID" value="UER00184"/>
</dbReference>
<dbReference type="GO" id="GO:0005737">
    <property type="term" value="C:cytoplasm"/>
    <property type="evidence" value="ECO:0007669"/>
    <property type="project" value="UniProtKB-SubCell"/>
</dbReference>
<dbReference type="GO" id="GO:0008839">
    <property type="term" value="F:4-hydroxy-tetrahydrodipicolinate reductase"/>
    <property type="evidence" value="ECO:0007669"/>
    <property type="project" value="InterPro"/>
</dbReference>
<dbReference type="GO" id="GO:0004365">
    <property type="term" value="F:glyceraldehyde-3-phosphate dehydrogenase (NAD+) (phosphorylating) activity"/>
    <property type="evidence" value="ECO:0007669"/>
    <property type="project" value="UniProtKB-UniRule"/>
</dbReference>
<dbReference type="GO" id="GO:0047100">
    <property type="term" value="F:glyceraldehyde-3-phosphate dehydrogenase (NADP+) (phosphorylating) activity"/>
    <property type="evidence" value="ECO:0007669"/>
    <property type="project" value="RHEA"/>
</dbReference>
<dbReference type="GO" id="GO:0051287">
    <property type="term" value="F:NAD binding"/>
    <property type="evidence" value="ECO:0007669"/>
    <property type="project" value="InterPro"/>
</dbReference>
<dbReference type="GO" id="GO:0050661">
    <property type="term" value="F:NADP binding"/>
    <property type="evidence" value="ECO:0007669"/>
    <property type="project" value="InterPro"/>
</dbReference>
<dbReference type="GO" id="GO:0006096">
    <property type="term" value="P:glycolytic process"/>
    <property type="evidence" value="ECO:0007669"/>
    <property type="project" value="UniProtKB-UniRule"/>
</dbReference>
<dbReference type="GO" id="GO:0009089">
    <property type="term" value="P:lysine biosynthetic process via diaminopimelate"/>
    <property type="evidence" value="ECO:0007669"/>
    <property type="project" value="InterPro"/>
</dbReference>
<dbReference type="CDD" id="cd18127">
    <property type="entry name" value="GAPDH_II_C"/>
    <property type="match status" value="1"/>
</dbReference>
<dbReference type="CDD" id="cd02278">
    <property type="entry name" value="GAPDH_II_N"/>
    <property type="match status" value="1"/>
</dbReference>
<dbReference type="Gene3D" id="3.30.360.10">
    <property type="entry name" value="Dihydrodipicolinate Reductase, domain 2"/>
    <property type="match status" value="1"/>
</dbReference>
<dbReference type="Gene3D" id="3.40.50.720">
    <property type="entry name" value="NAD(P)-binding Rossmann-like Domain"/>
    <property type="match status" value="1"/>
</dbReference>
<dbReference type="HAMAP" id="MF_00559">
    <property type="entry name" value="G3P_dehdrog_arch"/>
    <property type="match status" value="1"/>
</dbReference>
<dbReference type="InterPro" id="IPR000846">
    <property type="entry name" value="DapB_N"/>
</dbReference>
<dbReference type="InterPro" id="IPR020831">
    <property type="entry name" value="GlycerAld/Erythrose_P_DH"/>
</dbReference>
<dbReference type="InterPro" id="IPR020830">
    <property type="entry name" value="GlycerAld_3-P_DH_AS"/>
</dbReference>
<dbReference type="InterPro" id="IPR020829">
    <property type="entry name" value="GlycerAld_3-P_DH_cat"/>
</dbReference>
<dbReference type="InterPro" id="IPR020828">
    <property type="entry name" value="GlycerAld_3-P_DH_NAD(P)-bd"/>
</dbReference>
<dbReference type="InterPro" id="IPR006436">
    <property type="entry name" value="Glyceraldehyde-3-P_DH_2_arc"/>
</dbReference>
<dbReference type="InterPro" id="IPR036291">
    <property type="entry name" value="NAD(P)-bd_dom_sf"/>
</dbReference>
<dbReference type="NCBIfam" id="TIGR01546">
    <property type="entry name" value="GAPDH-II_archae"/>
    <property type="match status" value="1"/>
</dbReference>
<dbReference type="NCBIfam" id="NF003251">
    <property type="entry name" value="PRK04207.1"/>
    <property type="match status" value="1"/>
</dbReference>
<dbReference type="Pfam" id="PF01113">
    <property type="entry name" value="DapB_N"/>
    <property type="match status" value="1"/>
</dbReference>
<dbReference type="Pfam" id="PF02800">
    <property type="entry name" value="Gp_dh_C"/>
    <property type="match status" value="1"/>
</dbReference>
<dbReference type="PIRSF" id="PIRSF000149">
    <property type="entry name" value="GAP_DH"/>
    <property type="match status" value="1"/>
</dbReference>
<dbReference type="SMART" id="SM00846">
    <property type="entry name" value="Gp_dh_N"/>
    <property type="match status" value="1"/>
</dbReference>
<dbReference type="SUPFAM" id="SSF55347">
    <property type="entry name" value="Glyceraldehyde-3-phosphate dehydrogenase-like, C-terminal domain"/>
    <property type="match status" value="1"/>
</dbReference>
<dbReference type="SUPFAM" id="SSF51735">
    <property type="entry name" value="NAD(P)-binding Rossmann-fold domains"/>
    <property type="match status" value="1"/>
</dbReference>
<dbReference type="PROSITE" id="PS00071">
    <property type="entry name" value="GAPDH"/>
    <property type="match status" value="1"/>
</dbReference>
<proteinExistence type="inferred from homology"/>
<comment type="catalytic activity">
    <reaction evidence="1">
        <text>D-glyceraldehyde 3-phosphate + phosphate + NADP(+) = (2R)-3-phospho-glyceroyl phosphate + NADPH + H(+)</text>
        <dbReference type="Rhea" id="RHEA:10296"/>
        <dbReference type="ChEBI" id="CHEBI:15378"/>
        <dbReference type="ChEBI" id="CHEBI:43474"/>
        <dbReference type="ChEBI" id="CHEBI:57604"/>
        <dbReference type="ChEBI" id="CHEBI:57783"/>
        <dbReference type="ChEBI" id="CHEBI:58349"/>
        <dbReference type="ChEBI" id="CHEBI:59776"/>
        <dbReference type="EC" id="1.2.1.59"/>
    </reaction>
</comment>
<comment type="catalytic activity">
    <reaction evidence="1">
        <text>D-glyceraldehyde 3-phosphate + phosphate + NAD(+) = (2R)-3-phospho-glyceroyl phosphate + NADH + H(+)</text>
        <dbReference type="Rhea" id="RHEA:10300"/>
        <dbReference type="ChEBI" id="CHEBI:15378"/>
        <dbReference type="ChEBI" id="CHEBI:43474"/>
        <dbReference type="ChEBI" id="CHEBI:57540"/>
        <dbReference type="ChEBI" id="CHEBI:57604"/>
        <dbReference type="ChEBI" id="CHEBI:57945"/>
        <dbReference type="ChEBI" id="CHEBI:59776"/>
        <dbReference type="EC" id="1.2.1.59"/>
    </reaction>
</comment>
<comment type="pathway">
    <text evidence="1">Carbohydrate degradation; glycolysis; pyruvate from D-glyceraldehyde 3-phosphate: step 1/5.</text>
</comment>
<comment type="subunit">
    <text evidence="1">Homotetramer.</text>
</comment>
<comment type="subcellular location">
    <subcellularLocation>
        <location evidence="1">Cytoplasm</location>
    </subcellularLocation>
</comment>
<comment type="similarity">
    <text evidence="1">Belongs to the glyceraldehyde-3-phosphate dehydrogenase family.</text>
</comment>